<sequence length="391" mass="41526">MSVKKMADLDLTGKRLFIRADLNVPVKEGKITSDARIRATIPTLKLALQKGAKVMVTSHLGRPTEGVFEEANSLQPVVDYLNASDLGVPVRLVRDYLDGVEVNQNEIVVLENVRINKGEKKNDAELAKKYAALCDIFVMDAFGTAHRAECSTYGIAEFAPIACAGPLLAAELEALGKALKEPQRPMLAIVGGSKVSTKLTVLDSLSKIADQLIVGGGIANIFIAAEGHNVGKSLYEADLIPEAKRLASTTHIPVPVDVRVGTEFSETATATEKLVSEVTADESIFDIGDKSAEELAHIIKSAKTIFWNGPVGVFEFANFRKGTEIISNAIAEATANGAFSIAGGGDTLAAIDLFGIADKISYISTGGGAFLEFVEGKVLPAVEILEKRANS</sequence>
<organism>
    <name type="scientific">Haemophilus ducreyi (strain 35000HP / ATCC 700724)</name>
    <dbReference type="NCBI Taxonomy" id="233412"/>
    <lineage>
        <taxon>Bacteria</taxon>
        <taxon>Pseudomonadati</taxon>
        <taxon>Pseudomonadota</taxon>
        <taxon>Gammaproteobacteria</taxon>
        <taxon>Pasteurellales</taxon>
        <taxon>Pasteurellaceae</taxon>
        <taxon>Haemophilus</taxon>
    </lineage>
</organism>
<name>PGK_HAEDU</name>
<accession>Q7VMV0</accession>
<feature type="chain" id="PRO_0000145947" description="Phosphoglycerate kinase">
    <location>
        <begin position="1"/>
        <end position="391"/>
    </location>
</feature>
<feature type="binding site" evidence="1">
    <location>
        <begin position="21"/>
        <end position="23"/>
    </location>
    <ligand>
        <name>substrate</name>
    </ligand>
</feature>
<feature type="binding site" evidence="1">
    <location>
        <position position="36"/>
    </location>
    <ligand>
        <name>substrate</name>
    </ligand>
</feature>
<feature type="binding site" evidence="1">
    <location>
        <begin position="59"/>
        <end position="62"/>
    </location>
    <ligand>
        <name>substrate</name>
    </ligand>
</feature>
<feature type="binding site" evidence="1">
    <location>
        <position position="114"/>
    </location>
    <ligand>
        <name>substrate</name>
    </ligand>
</feature>
<feature type="binding site" evidence="1">
    <location>
        <position position="147"/>
    </location>
    <ligand>
        <name>substrate</name>
    </ligand>
</feature>
<feature type="binding site" evidence="1">
    <location>
        <position position="198"/>
    </location>
    <ligand>
        <name>ATP</name>
        <dbReference type="ChEBI" id="CHEBI:30616"/>
    </ligand>
</feature>
<feature type="binding site" evidence="1">
    <location>
        <position position="315"/>
    </location>
    <ligand>
        <name>ATP</name>
        <dbReference type="ChEBI" id="CHEBI:30616"/>
    </ligand>
</feature>
<feature type="binding site" evidence="1">
    <location>
        <begin position="344"/>
        <end position="347"/>
    </location>
    <ligand>
        <name>ATP</name>
        <dbReference type="ChEBI" id="CHEBI:30616"/>
    </ligand>
</feature>
<protein>
    <recommendedName>
        <fullName evidence="1">Phosphoglycerate kinase</fullName>
        <ecNumber evidence="1">2.7.2.3</ecNumber>
    </recommendedName>
</protein>
<keyword id="KW-0067">ATP-binding</keyword>
<keyword id="KW-0963">Cytoplasm</keyword>
<keyword id="KW-0324">Glycolysis</keyword>
<keyword id="KW-0418">Kinase</keyword>
<keyword id="KW-0547">Nucleotide-binding</keyword>
<keyword id="KW-1185">Reference proteome</keyword>
<keyword id="KW-0808">Transferase</keyword>
<comment type="catalytic activity">
    <reaction evidence="1">
        <text>(2R)-3-phosphoglycerate + ATP = (2R)-3-phospho-glyceroyl phosphate + ADP</text>
        <dbReference type="Rhea" id="RHEA:14801"/>
        <dbReference type="ChEBI" id="CHEBI:30616"/>
        <dbReference type="ChEBI" id="CHEBI:57604"/>
        <dbReference type="ChEBI" id="CHEBI:58272"/>
        <dbReference type="ChEBI" id="CHEBI:456216"/>
        <dbReference type="EC" id="2.7.2.3"/>
    </reaction>
</comment>
<comment type="pathway">
    <text evidence="1">Carbohydrate degradation; glycolysis; pyruvate from D-glyceraldehyde 3-phosphate: step 2/5.</text>
</comment>
<comment type="subunit">
    <text evidence="1">Monomer.</text>
</comment>
<comment type="subcellular location">
    <subcellularLocation>
        <location evidence="1">Cytoplasm</location>
    </subcellularLocation>
</comment>
<comment type="similarity">
    <text evidence="1">Belongs to the phosphoglycerate kinase family.</text>
</comment>
<evidence type="ECO:0000255" key="1">
    <source>
        <dbReference type="HAMAP-Rule" id="MF_00145"/>
    </source>
</evidence>
<reference key="1">
    <citation type="submission" date="2003-06" db="EMBL/GenBank/DDBJ databases">
        <title>The complete genome sequence of Haemophilus ducreyi.</title>
        <authorList>
            <person name="Munson R.S. Jr."/>
            <person name="Ray W.C."/>
            <person name="Mahairas G."/>
            <person name="Sabo P."/>
            <person name="Mungur R."/>
            <person name="Johnson L."/>
            <person name="Nguyen D."/>
            <person name="Wang J."/>
            <person name="Forst C."/>
            <person name="Hood L."/>
        </authorList>
    </citation>
    <scope>NUCLEOTIDE SEQUENCE [LARGE SCALE GENOMIC DNA]</scope>
    <source>
        <strain>35000HP / ATCC 700724</strain>
    </source>
</reference>
<dbReference type="EC" id="2.7.2.3" evidence="1"/>
<dbReference type="EMBL" id="AE017143">
    <property type="protein sequence ID" value="AAP95753.1"/>
    <property type="molecule type" value="Genomic_DNA"/>
</dbReference>
<dbReference type="RefSeq" id="WP_010944803.1">
    <property type="nucleotide sequence ID" value="NC_002940.2"/>
</dbReference>
<dbReference type="SMR" id="Q7VMV0"/>
<dbReference type="STRING" id="233412.HD_0865"/>
<dbReference type="KEGG" id="hdu:HD_0865"/>
<dbReference type="eggNOG" id="COG0126">
    <property type="taxonomic scope" value="Bacteria"/>
</dbReference>
<dbReference type="HOGENOM" id="CLU_025427_0_2_6"/>
<dbReference type="OrthoDB" id="9808460at2"/>
<dbReference type="UniPathway" id="UPA00109">
    <property type="reaction ID" value="UER00185"/>
</dbReference>
<dbReference type="Proteomes" id="UP000001022">
    <property type="component" value="Chromosome"/>
</dbReference>
<dbReference type="GO" id="GO:0005829">
    <property type="term" value="C:cytosol"/>
    <property type="evidence" value="ECO:0007669"/>
    <property type="project" value="TreeGrafter"/>
</dbReference>
<dbReference type="GO" id="GO:0043531">
    <property type="term" value="F:ADP binding"/>
    <property type="evidence" value="ECO:0007669"/>
    <property type="project" value="TreeGrafter"/>
</dbReference>
<dbReference type="GO" id="GO:0005524">
    <property type="term" value="F:ATP binding"/>
    <property type="evidence" value="ECO:0007669"/>
    <property type="project" value="UniProtKB-KW"/>
</dbReference>
<dbReference type="GO" id="GO:0004618">
    <property type="term" value="F:phosphoglycerate kinase activity"/>
    <property type="evidence" value="ECO:0007669"/>
    <property type="project" value="UniProtKB-UniRule"/>
</dbReference>
<dbReference type="GO" id="GO:0006094">
    <property type="term" value="P:gluconeogenesis"/>
    <property type="evidence" value="ECO:0007669"/>
    <property type="project" value="TreeGrafter"/>
</dbReference>
<dbReference type="GO" id="GO:0006096">
    <property type="term" value="P:glycolytic process"/>
    <property type="evidence" value="ECO:0007669"/>
    <property type="project" value="UniProtKB-UniRule"/>
</dbReference>
<dbReference type="FunFam" id="3.40.50.1260:FF:000001">
    <property type="entry name" value="Phosphoglycerate kinase"/>
    <property type="match status" value="1"/>
</dbReference>
<dbReference type="FunFam" id="3.40.50.1260:FF:000002">
    <property type="entry name" value="Phosphoglycerate kinase"/>
    <property type="match status" value="1"/>
</dbReference>
<dbReference type="Gene3D" id="3.40.50.1260">
    <property type="entry name" value="Phosphoglycerate kinase, N-terminal domain"/>
    <property type="match status" value="2"/>
</dbReference>
<dbReference type="HAMAP" id="MF_00145">
    <property type="entry name" value="Phosphoglyc_kinase"/>
    <property type="match status" value="1"/>
</dbReference>
<dbReference type="InterPro" id="IPR001576">
    <property type="entry name" value="Phosphoglycerate_kinase"/>
</dbReference>
<dbReference type="InterPro" id="IPR015824">
    <property type="entry name" value="Phosphoglycerate_kinase_N"/>
</dbReference>
<dbReference type="InterPro" id="IPR036043">
    <property type="entry name" value="Phosphoglycerate_kinase_sf"/>
</dbReference>
<dbReference type="PANTHER" id="PTHR11406">
    <property type="entry name" value="PHOSPHOGLYCERATE KINASE"/>
    <property type="match status" value="1"/>
</dbReference>
<dbReference type="PANTHER" id="PTHR11406:SF23">
    <property type="entry name" value="PHOSPHOGLYCERATE KINASE 1, CHLOROPLASTIC-RELATED"/>
    <property type="match status" value="1"/>
</dbReference>
<dbReference type="Pfam" id="PF00162">
    <property type="entry name" value="PGK"/>
    <property type="match status" value="1"/>
</dbReference>
<dbReference type="PIRSF" id="PIRSF000724">
    <property type="entry name" value="Pgk"/>
    <property type="match status" value="1"/>
</dbReference>
<dbReference type="PRINTS" id="PR00477">
    <property type="entry name" value="PHGLYCKINASE"/>
</dbReference>
<dbReference type="SUPFAM" id="SSF53748">
    <property type="entry name" value="Phosphoglycerate kinase"/>
    <property type="match status" value="1"/>
</dbReference>
<gene>
    <name evidence="1" type="primary">pgk</name>
    <name type="ordered locus">HD_0865</name>
</gene>
<proteinExistence type="inferred from homology"/>